<accession>A1BEB4</accession>
<name>F16PA_CHLPD</name>
<comment type="catalytic activity">
    <reaction evidence="1">
        <text>beta-D-fructose 1,6-bisphosphate + H2O = beta-D-fructose 6-phosphate + phosphate</text>
        <dbReference type="Rhea" id="RHEA:11064"/>
        <dbReference type="ChEBI" id="CHEBI:15377"/>
        <dbReference type="ChEBI" id="CHEBI:32966"/>
        <dbReference type="ChEBI" id="CHEBI:43474"/>
        <dbReference type="ChEBI" id="CHEBI:57634"/>
        <dbReference type="EC" id="3.1.3.11"/>
    </reaction>
</comment>
<comment type="cofactor">
    <cofactor evidence="1">
        <name>Mg(2+)</name>
        <dbReference type="ChEBI" id="CHEBI:18420"/>
    </cofactor>
    <text evidence="1">Binds 2 magnesium ions per subunit.</text>
</comment>
<comment type="pathway">
    <text evidence="1">Carbohydrate biosynthesis; Calvin cycle.</text>
</comment>
<comment type="subunit">
    <text evidence="1">Homotetramer.</text>
</comment>
<comment type="subcellular location">
    <subcellularLocation>
        <location evidence="1">Cytoplasm</location>
    </subcellularLocation>
</comment>
<comment type="similarity">
    <text evidence="1">Belongs to the FBPase class 1 family.</text>
</comment>
<protein>
    <recommendedName>
        <fullName evidence="1">Fructose-1,6-bisphosphatase class 1</fullName>
        <shortName evidence="1">FBPase class 1</shortName>
        <ecNumber evidence="1">3.1.3.11</ecNumber>
    </recommendedName>
    <alternativeName>
        <fullName evidence="1">D-fructose-1,6-bisphosphate 1-phosphohydrolase class 1</fullName>
    </alternativeName>
</protein>
<feature type="chain" id="PRO_0000364524" description="Fructose-1,6-bisphosphatase class 1">
    <location>
        <begin position="1"/>
        <end position="332"/>
    </location>
</feature>
<feature type="binding site" evidence="1">
    <location>
        <position position="91"/>
    </location>
    <ligand>
        <name>Mg(2+)</name>
        <dbReference type="ChEBI" id="CHEBI:18420"/>
        <label>1</label>
    </ligand>
</feature>
<feature type="binding site" evidence="1">
    <location>
        <position position="112"/>
    </location>
    <ligand>
        <name>Mg(2+)</name>
        <dbReference type="ChEBI" id="CHEBI:18420"/>
        <label>1</label>
    </ligand>
</feature>
<feature type="binding site" evidence="1">
    <location>
        <position position="112"/>
    </location>
    <ligand>
        <name>Mg(2+)</name>
        <dbReference type="ChEBI" id="CHEBI:18420"/>
        <label>2</label>
    </ligand>
</feature>
<feature type="binding site" evidence="1">
    <location>
        <position position="114"/>
    </location>
    <ligand>
        <name>Mg(2+)</name>
        <dbReference type="ChEBI" id="CHEBI:18420"/>
        <label>1</label>
    </ligand>
</feature>
<feature type="binding site" evidence="1">
    <location>
        <begin position="115"/>
        <end position="118"/>
    </location>
    <ligand>
        <name>substrate</name>
    </ligand>
</feature>
<feature type="binding site" evidence="1">
    <location>
        <position position="115"/>
    </location>
    <ligand>
        <name>Mg(2+)</name>
        <dbReference type="ChEBI" id="CHEBI:18420"/>
        <label>2</label>
    </ligand>
</feature>
<feature type="binding site" evidence="1">
    <location>
        <position position="208"/>
    </location>
    <ligand>
        <name>substrate</name>
    </ligand>
</feature>
<feature type="binding site" evidence="1">
    <location>
        <position position="241"/>
    </location>
    <ligand>
        <name>substrate</name>
    </ligand>
</feature>
<feature type="binding site" evidence="1">
    <location>
        <position position="271"/>
    </location>
    <ligand>
        <name>substrate</name>
    </ligand>
</feature>
<feature type="binding site" evidence="1">
    <location>
        <position position="277"/>
    </location>
    <ligand>
        <name>Mg(2+)</name>
        <dbReference type="ChEBI" id="CHEBI:18420"/>
        <label>2</label>
    </ligand>
</feature>
<evidence type="ECO:0000255" key="1">
    <source>
        <dbReference type="HAMAP-Rule" id="MF_01855"/>
    </source>
</evidence>
<organism>
    <name type="scientific">Chlorobium phaeobacteroides (strain DSM 266 / SMG 266 / 2430)</name>
    <dbReference type="NCBI Taxonomy" id="290317"/>
    <lineage>
        <taxon>Bacteria</taxon>
        <taxon>Pseudomonadati</taxon>
        <taxon>Chlorobiota</taxon>
        <taxon>Chlorobiia</taxon>
        <taxon>Chlorobiales</taxon>
        <taxon>Chlorobiaceae</taxon>
        <taxon>Chlorobium/Pelodictyon group</taxon>
        <taxon>Chlorobium</taxon>
    </lineage>
</organism>
<sequence length="332" mass="36742">MNLITIERHILEQQKFFPEFTGELTDLLNDVAFAAKLVRREVVRAGLVDILGFTGDTNIQGEQVKKLDLFANDKIINAIGQHGRFAIMGSEENDGIIIPPKNETGSYALLFDPLDGSSNIDVNVSVGTIFSIYKLKGDDPGKASLNDCLQHGYEQVAAGYVIYGSSVVMVYTTGHGVHGFTYDPTIGEFLLSHENIVTPKSGKYYSINEGSYGQFNEGTKKYLDYIKEEDPATGRPYSTRYIGSLVADFHRNLLTGGIFVYPPTITHPNGKLRLMYEANPLAFICEQAGGRATNGKERILDLQPSELHQRTPLYIGSEADVMIAEEFEQGKR</sequence>
<proteinExistence type="inferred from homology"/>
<dbReference type="EC" id="3.1.3.11" evidence="1"/>
<dbReference type="EMBL" id="CP000492">
    <property type="protein sequence ID" value="ABL64741.1"/>
    <property type="molecule type" value="Genomic_DNA"/>
</dbReference>
<dbReference type="RefSeq" id="WP_011744571.1">
    <property type="nucleotide sequence ID" value="NC_008639.1"/>
</dbReference>
<dbReference type="SMR" id="A1BEB4"/>
<dbReference type="STRING" id="290317.Cpha266_0686"/>
<dbReference type="KEGG" id="cph:Cpha266_0686"/>
<dbReference type="eggNOG" id="COG0158">
    <property type="taxonomic scope" value="Bacteria"/>
</dbReference>
<dbReference type="HOGENOM" id="CLU_039977_2_2_10"/>
<dbReference type="OrthoDB" id="9806756at2"/>
<dbReference type="UniPathway" id="UPA00116"/>
<dbReference type="Proteomes" id="UP000008701">
    <property type="component" value="Chromosome"/>
</dbReference>
<dbReference type="GO" id="GO:0005829">
    <property type="term" value="C:cytosol"/>
    <property type="evidence" value="ECO:0007669"/>
    <property type="project" value="TreeGrafter"/>
</dbReference>
<dbReference type="GO" id="GO:0042132">
    <property type="term" value="F:fructose 1,6-bisphosphate 1-phosphatase activity"/>
    <property type="evidence" value="ECO:0007669"/>
    <property type="project" value="UniProtKB-UniRule"/>
</dbReference>
<dbReference type="GO" id="GO:0000287">
    <property type="term" value="F:magnesium ion binding"/>
    <property type="evidence" value="ECO:0007669"/>
    <property type="project" value="UniProtKB-UniRule"/>
</dbReference>
<dbReference type="GO" id="GO:0030388">
    <property type="term" value="P:fructose 1,6-bisphosphate metabolic process"/>
    <property type="evidence" value="ECO:0007669"/>
    <property type="project" value="TreeGrafter"/>
</dbReference>
<dbReference type="GO" id="GO:0006002">
    <property type="term" value="P:fructose 6-phosphate metabolic process"/>
    <property type="evidence" value="ECO:0007669"/>
    <property type="project" value="TreeGrafter"/>
</dbReference>
<dbReference type="GO" id="GO:0006000">
    <property type="term" value="P:fructose metabolic process"/>
    <property type="evidence" value="ECO:0007669"/>
    <property type="project" value="TreeGrafter"/>
</dbReference>
<dbReference type="GO" id="GO:0006094">
    <property type="term" value="P:gluconeogenesis"/>
    <property type="evidence" value="ECO:0007669"/>
    <property type="project" value="UniProtKB-UniRule"/>
</dbReference>
<dbReference type="GO" id="GO:0019253">
    <property type="term" value="P:reductive pentose-phosphate cycle"/>
    <property type="evidence" value="ECO:0007669"/>
    <property type="project" value="UniProtKB-UniRule"/>
</dbReference>
<dbReference type="GO" id="GO:0005986">
    <property type="term" value="P:sucrose biosynthetic process"/>
    <property type="evidence" value="ECO:0007669"/>
    <property type="project" value="TreeGrafter"/>
</dbReference>
<dbReference type="CDD" id="cd00354">
    <property type="entry name" value="FBPase"/>
    <property type="match status" value="1"/>
</dbReference>
<dbReference type="FunFam" id="3.30.540.10:FF:000002">
    <property type="entry name" value="Fructose-1,6-bisphosphatase class 1"/>
    <property type="match status" value="1"/>
</dbReference>
<dbReference type="FunFam" id="3.40.190.80:FF:000001">
    <property type="entry name" value="Fructose-1,6-bisphosphatase class 1"/>
    <property type="match status" value="1"/>
</dbReference>
<dbReference type="Gene3D" id="3.40.190.80">
    <property type="match status" value="1"/>
</dbReference>
<dbReference type="Gene3D" id="3.30.540.10">
    <property type="entry name" value="Fructose-1,6-Bisphosphatase, subunit A, domain 1"/>
    <property type="match status" value="1"/>
</dbReference>
<dbReference type="HAMAP" id="MF_01855">
    <property type="entry name" value="FBPase_class1"/>
    <property type="match status" value="1"/>
</dbReference>
<dbReference type="InterPro" id="IPR044015">
    <property type="entry name" value="FBPase_C_dom"/>
</dbReference>
<dbReference type="InterPro" id="IPR000146">
    <property type="entry name" value="FBPase_class-1"/>
</dbReference>
<dbReference type="InterPro" id="IPR033391">
    <property type="entry name" value="FBPase_N"/>
</dbReference>
<dbReference type="InterPro" id="IPR028343">
    <property type="entry name" value="FBPtase"/>
</dbReference>
<dbReference type="NCBIfam" id="NF006778">
    <property type="entry name" value="PRK09293.1-1"/>
    <property type="match status" value="1"/>
</dbReference>
<dbReference type="PANTHER" id="PTHR11556">
    <property type="entry name" value="FRUCTOSE-1,6-BISPHOSPHATASE-RELATED"/>
    <property type="match status" value="1"/>
</dbReference>
<dbReference type="PANTHER" id="PTHR11556:SF35">
    <property type="entry name" value="SEDOHEPTULOSE-1,7-BISPHOSPHATASE, CHLOROPLASTIC"/>
    <property type="match status" value="1"/>
</dbReference>
<dbReference type="Pfam" id="PF00316">
    <property type="entry name" value="FBPase"/>
    <property type="match status" value="1"/>
</dbReference>
<dbReference type="Pfam" id="PF18913">
    <property type="entry name" value="FBPase_C"/>
    <property type="match status" value="1"/>
</dbReference>
<dbReference type="PIRSF" id="PIRSF500210">
    <property type="entry name" value="FBPtase"/>
    <property type="match status" value="1"/>
</dbReference>
<dbReference type="PIRSF" id="PIRSF000904">
    <property type="entry name" value="FBPtase_SBPase"/>
    <property type="match status" value="1"/>
</dbReference>
<dbReference type="PRINTS" id="PR00115">
    <property type="entry name" value="F16BPHPHTASE"/>
</dbReference>
<dbReference type="SUPFAM" id="SSF56655">
    <property type="entry name" value="Carbohydrate phosphatase"/>
    <property type="match status" value="1"/>
</dbReference>
<keyword id="KW-0113">Calvin cycle</keyword>
<keyword id="KW-0119">Carbohydrate metabolism</keyword>
<keyword id="KW-0963">Cytoplasm</keyword>
<keyword id="KW-0378">Hydrolase</keyword>
<keyword id="KW-0460">Magnesium</keyword>
<keyword id="KW-0479">Metal-binding</keyword>
<keyword id="KW-1185">Reference proteome</keyword>
<reference key="1">
    <citation type="submission" date="2006-12" db="EMBL/GenBank/DDBJ databases">
        <title>Complete sequence of Chlorobium phaeobacteroides DSM 266.</title>
        <authorList>
            <consortium name="US DOE Joint Genome Institute"/>
            <person name="Copeland A."/>
            <person name="Lucas S."/>
            <person name="Lapidus A."/>
            <person name="Barry K."/>
            <person name="Detter J.C."/>
            <person name="Glavina del Rio T."/>
            <person name="Hammon N."/>
            <person name="Israni S."/>
            <person name="Pitluck S."/>
            <person name="Goltsman E."/>
            <person name="Schmutz J."/>
            <person name="Larimer F."/>
            <person name="Land M."/>
            <person name="Hauser L."/>
            <person name="Mikhailova N."/>
            <person name="Li T."/>
            <person name="Overmann J."/>
            <person name="Bryant D.A."/>
            <person name="Richardson P."/>
        </authorList>
    </citation>
    <scope>NUCLEOTIDE SEQUENCE [LARGE SCALE GENOMIC DNA]</scope>
    <source>
        <strain>DSM 266 / SMG 266 / 2430</strain>
    </source>
</reference>
<gene>
    <name evidence="1" type="primary">fbp</name>
    <name type="ordered locus">Cpha266_0686</name>
</gene>